<accession>Q927M4</accession>
<feature type="chain" id="PRO_0000131538" description="Small ribosomal subunit protein uS5">
    <location>
        <begin position="1"/>
        <end position="167"/>
    </location>
</feature>
<feature type="domain" description="S5 DRBM" evidence="1">
    <location>
        <begin position="12"/>
        <end position="75"/>
    </location>
</feature>
<evidence type="ECO:0000255" key="1">
    <source>
        <dbReference type="HAMAP-Rule" id="MF_01307"/>
    </source>
</evidence>
<evidence type="ECO:0000305" key="2"/>
<dbReference type="EMBL" id="AL596173">
    <property type="protein sequence ID" value="CAC97990.1"/>
    <property type="molecule type" value="Genomic_DNA"/>
</dbReference>
<dbReference type="PIR" id="AF1777">
    <property type="entry name" value="AF1777"/>
</dbReference>
<dbReference type="RefSeq" id="WP_003772938.1">
    <property type="nucleotide sequence ID" value="NC_003212.1"/>
</dbReference>
<dbReference type="SMR" id="Q927M4"/>
<dbReference type="STRING" id="272626.gene:17567151"/>
<dbReference type="GeneID" id="93236037"/>
<dbReference type="KEGG" id="lin:rpsE"/>
<dbReference type="eggNOG" id="COG0098">
    <property type="taxonomic scope" value="Bacteria"/>
</dbReference>
<dbReference type="HOGENOM" id="CLU_065898_2_2_9"/>
<dbReference type="OrthoDB" id="9809045at2"/>
<dbReference type="Proteomes" id="UP000002513">
    <property type="component" value="Chromosome"/>
</dbReference>
<dbReference type="GO" id="GO:0015935">
    <property type="term" value="C:small ribosomal subunit"/>
    <property type="evidence" value="ECO:0007669"/>
    <property type="project" value="InterPro"/>
</dbReference>
<dbReference type="GO" id="GO:0019843">
    <property type="term" value="F:rRNA binding"/>
    <property type="evidence" value="ECO:0007669"/>
    <property type="project" value="UniProtKB-UniRule"/>
</dbReference>
<dbReference type="GO" id="GO:0003735">
    <property type="term" value="F:structural constituent of ribosome"/>
    <property type="evidence" value="ECO:0007669"/>
    <property type="project" value="InterPro"/>
</dbReference>
<dbReference type="GO" id="GO:0006412">
    <property type="term" value="P:translation"/>
    <property type="evidence" value="ECO:0007669"/>
    <property type="project" value="UniProtKB-UniRule"/>
</dbReference>
<dbReference type="FunFam" id="3.30.160.20:FF:000001">
    <property type="entry name" value="30S ribosomal protein S5"/>
    <property type="match status" value="1"/>
</dbReference>
<dbReference type="FunFam" id="3.30.230.10:FF:000002">
    <property type="entry name" value="30S ribosomal protein S5"/>
    <property type="match status" value="1"/>
</dbReference>
<dbReference type="Gene3D" id="3.30.160.20">
    <property type="match status" value="1"/>
</dbReference>
<dbReference type="Gene3D" id="3.30.230.10">
    <property type="match status" value="1"/>
</dbReference>
<dbReference type="HAMAP" id="MF_01307_B">
    <property type="entry name" value="Ribosomal_uS5_B"/>
    <property type="match status" value="1"/>
</dbReference>
<dbReference type="InterPro" id="IPR020568">
    <property type="entry name" value="Ribosomal_Su5_D2-typ_SF"/>
</dbReference>
<dbReference type="InterPro" id="IPR000851">
    <property type="entry name" value="Ribosomal_uS5"/>
</dbReference>
<dbReference type="InterPro" id="IPR005712">
    <property type="entry name" value="Ribosomal_uS5_bac-type"/>
</dbReference>
<dbReference type="InterPro" id="IPR005324">
    <property type="entry name" value="Ribosomal_uS5_C"/>
</dbReference>
<dbReference type="InterPro" id="IPR013810">
    <property type="entry name" value="Ribosomal_uS5_N"/>
</dbReference>
<dbReference type="InterPro" id="IPR018192">
    <property type="entry name" value="Ribosomal_uS5_N_CS"/>
</dbReference>
<dbReference type="InterPro" id="IPR014721">
    <property type="entry name" value="Ribsml_uS5_D2-typ_fold_subgr"/>
</dbReference>
<dbReference type="NCBIfam" id="TIGR01021">
    <property type="entry name" value="rpsE_bact"/>
    <property type="match status" value="1"/>
</dbReference>
<dbReference type="PANTHER" id="PTHR48277">
    <property type="entry name" value="MITOCHONDRIAL RIBOSOMAL PROTEIN S5"/>
    <property type="match status" value="1"/>
</dbReference>
<dbReference type="PANTHER" id="PTHR48277:SF1">
    <property type="entry name" value="MITOCHONDRIAL RIBOSOMAL PROTEIN S5"/>
    <property type="match status" value="1"/>
</dbReference>
<dbReference type="Pfam" id="PF00333">
    <property type="entry name" value="Ribosomal_S5"/>
    <property type="match status" value="1"/>
</dbReference>
<dbReference type="Pfam" id="PF03719">
    <property type="entry name" value="Ribosomal_S5_C"/>
    <property type="match status" value="1"/>
</dbReference>
<dbReference type="SUPFAM" id="SSF54768">
    <property type="entry name" value="dsRNA-binding domain-like"/>
    <property type="match status" value="1"/>
</dbReference>
<dbReference type="SUPFAM" id="SSF54211">
    <property type="entry name" value="Ribosomal protein S5 domain 2-like"/>
    <property type="match status" value="1"/>
</dbReference>
<dbReference type="PROSITE" id="PS00585">
    <property type="entry name" value="RIBOSOMAL_S5"/>
    <property type="match status" value="1"/>
</dbReference>
<dbReference type="PROSITE" id="PS50881">
    <property type="entry name" value="S5_DSRBD"/>
    <property type="match status" value="1"/>
</dbReference>
<organism>
    <name type="scientific">Listeria innocua serovar 6a (strain ATCC BAA-680 / CLIP 11262)</name>
    <dbReference type="NCBI Taxonomy" id="272626"/>
    <lineage>
        <taxon>Bacteria</taxon>
        <taxon>Bacillati</taxon>
        <taxon>Bacillota</taxon>
        <taxon>Bacilli</taxon>
        <taxon>Bacillales</taxon>
        <taxon>Listeriaceae</taxon>
        <taxon>Listeria</taxon>
    </lineage>
</organism>
<gene>
    <name evidence="1" type="primary">rpsE</name>
    <name type="ordered locus">lin2764</name>
</gene>
<name>RS5_LISIN</name>
<protein>
    <recommendedName>
        <fullName evidence="1">Small ribosomal subunit protein uS5</fullName>
    </recommendedName>
    <alternativeName>
        <fullName evidence="2">30S ribosomal protein S5</fullName>
    </alternativeName>
</protein>
<sequence>MPEQIDGNKLDLEERVVTINRVAKVVKGGRRFRFTALVVVGDKNGHVGFGTGKAQEVPDAIRKAVEDAKKNMVFVPTVDTTIPHTVVGHFGGGEILLKPASAGSGVTAGGPVRAVLELAGVADVSSKSLGSNTPINMVRATIDGIKQLKNAEDVAKLRGKTVEELLG</sequence>
<proteinExistence type="inferred from homology"/>
<comment type="function">
    <text evidence="1">With S4 and S12 plays an important role in translational accuracy.</text>
</comment>
<comment type="function">
    <text evidence="1">Located at the back of the 30S subunit body where it stabilizes the conformation of the head with respect to the body.</text>
</comment>
<comment type="subunit">
    <text evidence="1">Part of the 30S ribosomal subunit. Contacts proteins S4 and S8.</text>
</comment>
<comment type="domain">
    <text>The N-terminal domain interacts with the head of the 30S subunit; the C-terminal domain interacts with the body and contacts protein S4. The interaction surface between S4 and S5 is involved in control of translational fidelity.</text>
</comment>
<comment type="similarity">
    <text evidence="1">Belongs to the universal ribosomal protein uS5 family.</text>
</comment>
<keyword id="KW-0687">Ribonucleoprotein</keyword>
<keyword id="KW-0689">Ribosomal protein</keyword>
<keyword id="KW-0694">RNA-binding</keyword>
<keyword id="KW-0699">rRNA-binding</keyword>
<reference key="1">
    <citation type="journal article" date="2001" name="Science">
        <title>Comparative genomics of Listeria species.</title>
        <authorList>
            <person name="Glaser P."/>
            <person name="Frangeul L."/>
            <person name="Buchrieser C."/>
            <person name="Rusniok C."/>
            <person name="Amend A."/>
            <person name="Baquero F."/>
            <person name="Berche P."/>
            <person name="Bloecker H."/>
            <person name="Brandt P."/>
            <person name="Chakraborty T."/>
            <person name="Charbit A."/>
            <person name="Chetouani F."/>
            <person name="Couve E."/>
            <person name="de Daruvar A."/>
            <person name="Dehoux P."/>
            <person name="Domann E."/>
            <person name="Dominguez-Bernal G."/>
            <person name="Duchaud E."/>
            <person name="Durant L."/>
            <person name="Dussurget O."/>
            <person name="Entian K.-D."/>
            <person name="Fsihi H."/>
            <person name="Garcia-del Portillo F."/>
            <person name="Garrido P."/>
            <person name="Gautier L."/>
            <person name="Goebel W."/>
            <person name="Gomez-Lopez N."/>
            <person name="Hain T."/>
            <person name="Hauf J."/>
            <person name="Jackson D."/>
            <person name="Jones L.-M."/>
            <person name="Kaerst U."/>
            <person name="Kreft J."/>
            <person name="Kuhn M."/>
            <person name="Kunst F."/>
            <person name="Kurapkat G."/>
            <person name="Madueno E."/>
            <person name="Maitournam A."/>
            <person name="Mata Vicente J."/>
            <person name="Ng E."/>
            <person name="Nedjari H."/>
            <person name="Nordsiek G."/>
            <person name="Novella S."/>
            <person name="de Pablos B."/>
            <person name="Perez-Diaz J.-C."/>
            <person name="Purcell R."/>
            <person name="Remmel B."/>
            <person name="Rose M."/>
            <person name="Schlueter T."/>
            <person name="Simoes N."/>
            <person name="Tierrez A."/>
            <person name="Vazquez-Boland J.-A."/>
            <person name="Voss H."/>
            <person name="Wehland J."/>
            <person name="Cossart P."/>
        </authorList>
    </citation>
    <scope>NUCLEOTIDE SEQUENCE [LARGE SCALE GENOMIC DNA]</scope>
    <source>
        <strain>ATCC BAA-680 / CLIP 11262</strain>
    </source>
</reference>